<feature type="chain" id="PRO_0000207508" description="Probable 7-dehydrocholesterol reductase">
    <location>
        <begin position="1"/>
        <end position="447"/>
    </location>
</feature>
<feature type="transmembrane region" description="Helical" evidence="4">
    <location>
        <begin position="24"/>
        <end position="44"/>
    </location>
</feature>
<feature type="transmembrane region" description="Helical" evidence="4">
    <location>
        <begin position="71"/>
        <end position="91"/>
    </location>
</feature>
<feature type="transmembrane region" description="Helical" evidence="4">
    <location>
        <begin position="102"/>
        <end position="124"/>
    </location>
</feature>
<feature type="transmembrane region" description="Helical" evidence="4">
    <location>
        <begin position="133"/>
        <end position="153"/>
    </location>
</feature>
<feature type="transmembrane region" description="Helical" evidence="4">
    <location>
        <begin position="157"/>
        <end position="177"/>
    </location>
</feature>
<feature type="transmembrane region" description="Helical" evidence="4">
    <location>
        <begin position="244"/>
        <end position="264"/>
    </location>
</feature>
<feature type="transmembrane region" description="Helical" evidence="4">
    <location>
        <begin position="281"/>
        <end position="301"/>
    </location>
</feature>
<feature type="transmembrane region" description="Helical" evidence="4">
    <location>
        <begin position="309"/>
        <end position="329"/>
    </location>
</feature>
<feature type="transmembrane region" description="Helical" evidence="4">
    <location>
        <begin position="393"/>
        <end position="413"/>
    </location>
</feature>
<feature type="binding site" evidence="2">
    <location>
        <position position="337"/>
    </location>
    <ligand>
        <name>NADP(+)</name>
        <dbReference type="ChEBI" id="CHEBI:58349"/>
    </ligand>
</feature>
<feature type="binding site" evidence="2">
    <location>
        <position position="341"/>
    </location>
    <ligand>
        <name>NADP(+)</name>
        <dbReference type="ChEBI" id="CHEBI:58349"/>
    </ligand>
</feature>
<feature type="binding site" evidence="2">
    <location>
        <position position="367"/>
    </location>
    <ligand>
        <name>NADP(+)</name>
        <dbReference type="ChEBI" id="CHEBI:58349"/>
    </ligand>
</feature>
<feature type="binding site" evidence="2">
    <location>
        <position position="372"/>
    </location>
    <ligand>
        <name>NADP(+)</name>
        <dbReference type="ChEBI" id="CHEBI:58349"/>
    </ligand>
</feature>
<feature type="binding site" evidence="2">
    <location>
        <begin position="379"/>
        <end position="380"/>
    </location>
    <ligand>
        <name>NADP(+)</name>
        <dbReference type="ChEBI" id="CHEBI:58349"/>
    </ligand>
</feature>
<feature type="binding site" evidence="2">
    <location>
        <position position="419"/>
    </location>
    <ligand>
        <name>NADP(+)</name>
        <dbReference type="ChEBI" id="CHEBI:58349"/>
    </ligand>
</feature>
<feature type="binding site" evidence="2">
    <location>
        <begin position="423"/>
        <end position="427"/>
    </location>
    <ligand>
        <name>NADP(+)</name>
        <dbReference type="ChEBI" id="CHEBI:58349"/>
    </ligand>
</feature>
<feature type="binding site" evidence="2">
    <location>
        <position position="434"/>
    </location>
    <ligand>
        <name>NADP(+)</name>
        <dbReference type="ChEBI" id="CHEBI:58349"/>
    </ligand>
</feature>
<keyword id="KW-0152">Cholesterol biosynthesis</keyword>
<keyword id="KW-0153">Cholesterol metabolism</keyword>
<keyword id="KW-0444">Lipid biosynthesis</keyword>
<keyword id="KW-0443">Lipid metabolism</keyword>
<keyword id="KW-0472">Membrane</keyword>
<keyword id="KW-0521">NADP</keyword>
<keyword id="KW-0560">Oxidoreductase</keyword>
<keyword id="KW-1185">Reference proteome</keyword>
<keyword id="KW-0752">Steroid biosynthesis</keyword>
<keyword id="KW-0753">Steroid metabolism</keyword>
<keyword id="KW-0756">Sterol biosynthesis</keyword>
<keyword id="KW-1207">Sterol metabolism</keyword>
<keyword id="KW-0812">Transmembrane</keyword>
<keyword id="KW-1133">Transmembrane helix</keyword>
<protein>
    <recommendedName>
        <fullName>Probable 7-dehydrocholesterol reductase</fullName>
        <shortName>7-DHC reductase</shortName>
        <ecNumber>1.3.1.21</ecNumber>
    </recommendedName>
    <alternativeName>
        <fullName>Sterol Delta(7)-reductase</fullName>
    </alternativeName>
</protein>
<evidence type="ECO:0000250" key="1"/>
<evidence type="ECO:0000250" key="2">
    <source>
        <dbReference type="UniProtKB" id="G4SW86"/>
    </source>
</evidence>
<evidence type="ECO:0000250" key="3">
    <source>
        <dbReference type="UniProtKB" id="Q9UBM7"/>
    </source>
</evidence>
<evidence type="ECO:0000255" key="4"/>
<evidence type="ECO:0000305" key="5"/>
<name>DHCR7_MIMIV</name>
<sequence length="447" mass="51692">MNSYQTNTATSWGRNHIPTLLDNLTTAAMFMFCPFIILVFYLITYGEYLGSIGDFYLDIINGDWQTIWSNIPSFKINVLGACLLWIVFQLILSKLPDTIHRFVPHYVGGIKAGHITPAGNLVYYNINGLQAFIITHVLVIMSCYYGLFSPTIIMDNWGSIFWSVNIIGYLITFLAYFKALTFSSHPSDNKFTGKLFYDIVMGIEFNPEIFGTDLKLFFNGRPGIIAWNLINLSCAMKQYENFGYVSNSMILVIILQLIYIVDFFYNENWYVHTVDIAHDHFGWMLAWGDTVWLPFGYTLQAGYLMNNPIDLSTGFFNLVFVMGIIGYIIFRTANYQKDKYRSNTQGVKYIPCTYQTADGLNRASKLIYSGLWGVSRHMNYTGDIILSTAYCLACGFSHFIPYFYCVYMTILLVTRCLRDEQRCSRKYGKYWKMYTKRVPYRFIPGIY</sequence>
<reference key="1">
    <citation type="journal article" date="2004" name="Science">
        <title>The 1.2-megabase genome sequence of Mimivirus.</title>
        <authorList>
            <person name="Raoult D."/>
            <person name="Audic S."/>
            <person name="Robert C."/>
            <person name="Abergel C."/>
            <person name="Renesto P."/>
            <person name="Ogata H."/>
            <person name="La Scola B."/>
            <person name="Susan M."/>
            <person name="Claverie J.-M."/>
        </authorList>
    </citation>
    <scope>NUCLEOTIDE SEQUENCE [LARGE SCALE GENOMIC DNA]</scope>
    <source>
        <strain>Rowbotham-Bradford</strain>
    </source>
</reference>
<organismHost>
    <name type="scientific">Acanthamoeba polyphaga</name>
    <name type="common">Amoeba</name>
    <dbReference type="NCBI Taxonomy" id="5757"/>
</organismHost>
<accession>Q5UQI4</accession>
<comment type="function">
    <text evidence="3">Catalyzes the last step of the cholesterol synthesis pathway, which transforms cholesta-5,7-dien-3beta-ol (7-dehydrocholesterol,7-DHC) into cholesterol by reducing the C7-C8 double bond of its sterol core.</text>
</comment>
<comment type="catalytic activity">
    <reaction>
        <text>cholesterol + NADP(+) = 7-dehydrocholesterol + NADPH + H(+)</text>
        <dbReference type="Rhea" id="RHEA:23984"/>
        <dbReference type="ChEBI" id="CHEBI:15378"/>
        <dbReference type="ChEBI" id="CHEBI:16113"/>
        <dbReference type="ChEBI" id="CHEBI:17759"/>
        <dbReference type="ChEBI" id="CHEBI:57783"/>
        <dbReference type="ChEBI" id="CHEBI:58349"/>
        <dbReference type="EC" id="1.3.1.21"/>
    </reaction>
</comment>
<comment type="pathway">
    <text>Steroid biosynthesis; cholesterol biosynthesis.</text>
</comment>
<comment type="subcellular location">
    <subcellularLocation>
        <location evidence="1">Membrane</location>
        <topology evidence="1">Multi-pass membrane protein</topology>
    </subcellularLocation>
</comment>
<comment type="similarity">
    <text evidence="5">Belongs to the ERG4/ERG24 family.</text>
</comment>
<proteinExistence type="inferred from homology"/>
<dbReference type="EC" id="1.3.1.21"/>
<dbReference type="EMBL" id="AY653733">
    <property type="protein sequence ID" value="AAV51067.1"/>
    <property type="molecule type" value="Genomic_DNA"/>
</dbReference>
<dbReference type="SMR" id="Q5UQI4"/>
<dbReference type="KEGG" id="vg:9925469"/>
<dbReference type="OrthoDB" id="29578at10239"/>
<dbReference type="UniPathway" id="UPA00063"/>
<dbReference type="Proteomes" id="UP000001134">
    <property type="component" value="Genome"/>
</dbReference>
<dbReference type="GO" id="GO:0016020">
    <property type="term" value="C:membrane"/>
    <property type="evidence" value="ECO:0007669"/>
    <property type="project" value="UniProtKB-SubCell"/>
</dbReference>
<dbReference type="GO" id="GO:0047598">
    <property type="term" value="F:7-dehydrocholesterol reductase activity"/>
    <property type="evidence" value="ECO:0007669"/>
    <property type="project" value="UniProtKB-EC"/>
</dbReference>
<dbReference type="GO" id="GO:0050661">
    <property type="term" value="F:NADP binding"/>
    <property type="evidence" value="ECO:0000250"/>
    <property type="project" value="UniProtKB"/>
</dbReference>
<dbReference type="GO" id="GO:0016132">
    <property type="term" value="P:brassinosteroid biosynthetic process"/>
    <property type="evidence" value="ECO:0007669"/>
    <property type="project" value="TreeGrafter"/>
</dbReference>
<dbReference type="GO" id="GO:0006695">
    <property type="term" value="P:cholesterol biosynthetic process"/>
    <property type="evidence" value="ECO:0007669"/>
    <property type="project" value="UniProtKB-UniPathway"/>
</dbReference>
<dbReference type="FunFam" id="1.20.120.1630:FF:000004">
    <property type="entry name" value="7-dehydrocholesterol reductase"/>
    <property type="match status" value="1"/>
</dbReference>
<dbReference type="Gene3D" id="1.20.120.1630">
    <property type="match status" value="1"/>
</dbReference>
<dbReference type="InterPro" id="IPR001171">
    <property type="entry name" value="ERG24_DHCR-like"/>
</dbReference>
<dbReference type="PANTHER" id="PTHR21257:SF38">
    <property type="entry name" value="7-DEHYDROCHOLESTEROL REDUCTASE"/>
    <property type="match status" value="1"/>
</dbReference>
<dbReference type="PANTHER" id="PTHR21257">
    <property type="entry name" value="DELTA(14)-STEROL REDUCTASE"/>
    <property type="match status" value="1"/>
</dbReference>
<dbReference type="Pfam" id="PF01222">
    <property type="entry name" value="ERG4_ERG24"/>
    <property type="match status" value="1"/>
</dbReference>
<gene>
    <name type="primary">DHCR7</name>
    <name type="ordered locus">MIMI_R807</name>
</gene>
<organism>
    <name type="scientific">Acanthamoeba polyphaga mimivirus</name>
    <name type="common">APMV</name>
    <dbReference type="NCBI Taxonomy" id="212035"/>
    <lineage>
        <taxon>Viruses</taxon>
        <taxon>Varidnaviria</taxon>
        <taxon>Bamfordvirae</taxon>
        <taxon>Nucleocytoviricota</taxon>
        <taxon>Megaviricetes</taxon>
        <taxon>Imitervirales</taxon>
        <taxon>Mimiviridae</taxon>
        <taxon>Megamimivirinae</taxon>
        <taxon>Mimivirus</taxon>
        <taxon>Mimivirus bradfordmassiliense</taxon>
    </lineage>
</organism>